<comment type="function">
    <text evidence="1">Catalyzes the formation of 5-methyl-uridine at position 1939 (m5U1939) in 23S rRNA.</text>
</comment>
<comment type="catalytic activity">
    <reaction evidence="1">
        <text>uridine(1939) in 23S rRNA + S-adenosyl-L-methionine = 5-methyluridine(1939) in 23S rRNA + S-adenosyl-L-homocysteine + H(+)</text>
        <dbReference type="Rhea" id="RHEA:42908"/>
        <dbReference type="Rhea" id="RHEA-COMP:10278"/>
        <dbReference type="Rhea" id="RHEA-COMP:10279"/>
        <dbReference type="ChEBI" id="CHEBI:15378"/>
        <dbReference type="ChEBI" id="CHEBI:57856"/>
        <dbReference type="ChEBI" id="CHEBI:59789"/>
        <dbReference type="ChEBI" id="CHEBI:65315"/>
        <dbReference type="ChEBI" id="CHEBI:74447"/>
        <dbReference type="EC" id="2.1.1.190"/>
    </reaction>
</comment>
<comment type="similarity">
    <text evidence="1">Belongs to the class I-like SAM-binding methyltransferase superfamily. RNA M5U methyltransferase family. RlmD subfamily.</text>
</comment>
<gene>
    <name evidence="1" type="primary">rlmD</name>
    <name type="synonym">rumA</name>
    <name type="ordered locus">PA0933</name>
</gene>
<dbReference type="EC" id="2.1.1.190" evidence="1"/>
<dbReference type="EMBL" id="AE004091">
    <property type="protein sequence ID" value="AAG04322.1"/>
    <property type="molecule type" value="Genomic_DNA"/>
</dbReference>
<dbReference type="PIR" id="B83530">
    <property type="entry name" value="B83530"/>
</dbReference>
<dbReference type="RefSeq" id="WP_003102417.1">
    <property type="nucleotide sequence ID" value="NZ_QZGE01000007.1"/>
</dbReference>
<dbReference type="SMR" id="Q9I525"/>
<dbReference type="FunCoup" id="Q9I525">
    <property type="interactions" value="542"/>
</dbReference>
<dbReference type="STRING" id="208964.PA0933"/>
<dbReference type="PaxDb" id="208964-PA0933"/>
<dbReference type="KEGG" id="pae:PA0933"/>
<dbReference type="PATRIC" id="fig|208964.12.peg.968"/>
<dbReference type="PseudoCAP" id="PA0933"/>
<dbReference type="HOGENOM" id="CLU_014689_8_2_6"/>
<dbReference type="InParanoid" id="Q9I525"/>
<dbReference type="OrthoDB" id="9804590at2"/>
<dbReference type="PhylomeDB" id="Q9I525"/>
<dbReference type="BioCyc" id="PAER208964:G1FZ6-953-MONOMER"/>
<dbReference type="Proteomes" id="UP000002438">
    <property type="component" value="Chromosome"/>
</dbReference>
<dbReference type="GO" id="GO:0051539">
    <property type="term" value="F:4 iron, 4 sulfur cluster binding"/>
    <property type="evidence" value="ECO:0007669"/>
    <property type="project" value="UniProtKB-KW"/>
</dbReference>
<dbReference type="GO" id="GO:0005506">
    <property type="term" value="F:iron ion binding"/>
    <property type="evidence" value="ECO:0007669"/>
    <property type="project" value="UniProtKB-UniRule"/>
</dbReference>
<dbReference type="GO" id="GO:0003723">
    <property type="term" value="F:RNA binding"/>
    <property type="evidence" value="ECO:0007669"/>
    <property type="project" value="InterPro"/>
</dbReference>
<dbReference type="GO" id="GO:0070041">
    <property type="term" value="F:rRNA (uridine-C5-)-methyltransferase activity"/>
    <property type="evidence" value="ECO:0000318"/>
    <property type="project" value="GO_Central"/>
</dbReference>
<dbReference type="GO" id="GO:0070475">
    <property type="term" value="P:rRNA base methylation"/>
    <property type="evidence" value="ECO:0000318"/>
    <property type="project" value="GO_Central"/>
</dbReference>
<dbReference type="CDD" id="cd02440">
    <property type="entry name" value="AdoMet_MTases"/>
    <property type="match status" value="1"/>
</dbReference>
<dbReference type="FunFam" id="3.40.50.150:FF:000009">
    <property type="entry name" value="23S rRNA (Uracil(1939)-C(5))-methyltransferase RlmD"/>
    <property type="match status" value="1"/>
</dbReference>
<dbReference type="FunFam" id="2.40.50.140:FF:000458">
    <property type="entry name" value="23S rRNA (uracil(1939)-C(5))-methyltransferase RlmD"/>
    <property type="match status" value="1"/>
</dbReference>
<dbReference type="Gene3D" id="2.40.50.1070">
    <property type="match status" value="1"/>
</dbReference>
<dbReference type="Gene3D" id="2.40.50.140">
    <property type="entry name" value="Nucleic acid-binding proteins"/>
    <property type="match status" value="1"/>
</dbReference>
<dbReference type="Gene3D" id="3.40.50.150">
    <property type="entry name" value="Vaccinia Virus protein VP39"/>
    <property type="match status" value="1"/>
</dbReference>
<dbReference type="HAMAP" id="MF_01010">
    <property type="entry name" value="23SrRNA_methyltr_RlmD"/>
    <property type="match status" value="1"/>
</dbReference>
<dbReference type="InterPro" id="IPR001566">
    <property type="entry name" value="23S_rRNA_MeTrfase_RlmD"/>
</dbReference>
<dbReference type="InterPro" id="IPR030390">
    <property type="entry name" value="MeTrfase_TrmA_AS"/>
</dbReference>
<dbReference type="InterPro" id="IPR030391">
    <property type="entry name" value="MeTrfase_TrmA_CS"/>
</dbReference>
<dbReference type="InterPro" id="IPR012340">
    <property type="entry name" value="NA-bd_OB-fold"/>
</dbReference>
<dbReference type="InterPro" id="IPR029063">
    <property type="entry name" value="SAM-dependent_MTases_sf"/>
</dbReference>
<dbReference type="InterPro" id="IPR002792">
    <property type="entry name" value="TRAM_dom"/>
</dbReference>
<dbReference type="InterPro" id="IPR010280">
    <property type="entry name" value="U5_MeTrfase_fam"/>
</dbReference>
<dbReference type="NCBIfam" id="NF009639">
    <property type="entry name" value="PRK13168.1"/>
    <property type="match status" value="1"/>
</dbReference>
<dbReference type="NCBIfam" id="TIGR00479">
    <property type="entry name" value="rumA"/>
    <property type="match status" value="1"/>
</dbReference>
<dbReference type="PANTHER" id="PTHR11061:SF49">
    <property type="entry name" value="23S RRNA (URACIL(1939)-C(5))-METHYLTRANSFERASE RLMD"/>
    <property type="match status" value="1"/>
</dbReference>
<dbReference type="PANTHER" id="PTHR11061">
    <property type="entry name" value="RNA M5U METHYLTRANSFERASE"/>
    <property type="match status" value="1"/>
</dbReference>
<dbReference type="Pfam" id="PF01938">
    <property type="entry name" value="TRAM"/>
    <property type="match status" value="1"/>
</dbReference>
<dbReference type="Pfam" id="PF05958">
    <property type="entry name" value="tRNA_U5-meth_tr"/>
    <property type="match status" value="1"/>
</dbReference>
<dbReference type="SUPFAM" id="SSF50249">
    <property type="entry name" value="Nucleic acid-binding proteins"/>
    <property type="match status" value="1"/>
</dbReference>
<dbReference type="SUPFAM" id="SSF53335">
    <property type="entry name" value="S-adenosyl-L-methionine-dependent methyltransferases"/>
    <property type="match status" value="1"/>
</dbReference>
<dbReference type="PROSITE" id="PS51687">
    <property type="entry name" value="SAM_MT_RNA_M5U"/>
    <property type="match status" value="1"/>
</dbReference>
<dbReference type="PROSITE" id="PS50926">
    <property type="entry name" value="TRAM"/>
    <property type="match status" value="1"/>
</dbReference>
<dbReference type="PROSITE" id="PS01230">
    <property type="entry name" value="TRMA_1"/>
    <property type="match status" value="1"/>
</dbReference>
<dbReference type="PROSITE" id="PS01231">
    <property type="entry name" value="TRMA_2"/>
    <property type="match status" value="1"/>
</dbReference>
<keyword id="KW-0004">4Fe-4S</keyword>
<keyword id="KW-0408">Iron</keyword>
<keyword id="KW-0411">Iron-sulfur</keyword>
<keyword id="KW-0479">Metal-binding</keyword>
<keyword id="KW-0489">Methyltransferase</keyword>
<keyword id="KW-1185">Reference proteome</keyword>
<keyword id="KW-0698">rRNA processing</keyword>
<keyword id="KW-0949">S-adenosyl-L-methionine</keyword>
<keyword id="KW-0808">Transferase</keyword>
<protein>
    <recommendedName>
        <fullName evidence="1">23S rRNA (uracil(1939)-C(5))-methyltransferase RlmD</fullName>
        <ecNumber evidence="1">2.1.1.190</ecNumber>
    </recommendedName>
    <alternativeName>
        <fullName evidence="1">23S rRNA(m5U1939)-methyltransferase</fullName>
    </alternativeName>
</protein>
<reference key="1">
    <citation type="journal article" date="2000" name="Nature">
        <title>Complete genome sequence of Pseudomonas aeruginosa PAO1, an opportunistic pathogen.</title>
        <authorList>
            <person name="Stover C.K."/>
            <person name="Pham X.-Q.T."/>
            <person name="Erwin A.L."/>
            <person name="Mizoguchi S.D."/>
            <person name="Warrener P."/>
            <person name="Hickey M.J."/>
            <person name="Brinkman F.S.L."/>
            <person name="Hufnagle W.O."/>
            <person name="Kowalik D.J."/>
            <person name="Lagrou M."/>
            <person name="Garber R.L."/>
            <person name="Goltry L."/>
            <person name="Tolentino E."/>
            <person name="Westbrock-Wadman S."/>
            <person name="Yuan Y."/>
            <person name="Brody L.L."/>
            <person name="Coulter S.N."/>
            <person name="Folger K.R."/>
            <person name="Kas A."/>
            <person name="Larbig K."/>
            <person name="Lim R.M."/>
            <person name="Smith K.A."/>
            <person name="Spencer D.H."/>
            <person name="Wong G.K.-S."/>
            <person name="Wu Z."/>
            <person name="Paulsen I.T."/>
            <person name="Reizer J."/>
            <person name="Saier M.H. Jr."/>
            <person name="Hancock R.E.W."/>
            <person name="Lory S."/>
            <person name="Olson M.V."/>
        </authorList>
    </citation>
    <scope>NUCLEOTIDE SEQUENCE [LARGE SCALE GENOMIC DNA]</scope>
    <source>
        <strain>ATCC 15692 / DSM 22644 / CIP 104116 / JCM 14847 / LMG 12228 / 1C / PRS 101 / PAO1</strain>
    </source>
</reference>
<organism>
    <name type="scientific">Pseudomonas aeruginosa (strain ATCC 15692 / DSM 22644 / CIP 104116 / JCM 14847 / LMG 12228 / 1C / PRS 101 / PAO1)</name>
    <dbReference type="NCBI Taxonomy" id="208964"/>
    <lineage>
        <taxon>Bacteria</taxon>
        <taxon>Pseudomonadati</taxon>
        <taxon>Pseudomonadota</taxon>
        <taxon>Gammaproteobacteria</taxon>
        <taxon>Pseudomonadales</taxon>
        <taxon>Pseudomonadaceae</taxon>
        <taxon>Pseudomonas</taxon>
    </lineage>
</organism>
<evidence type="ECO:0000255" key="1">
    <source>
        <dbReference type="HAMAP-Rule" id="MF_01010"/>
    </source>
</evidence>
<evidence type="ECO:0000256" key="2">
    <source>
        <dbReference type="SAM" id="MobiDB-lite"/>
    </source>
</evidence>
<name>RLMD_PSEAE</name>
<accession>Q9I525</accession>
<sequence length="450" mass="49071">MARNKGGLRFQPSGGARGPAIPVGKKQRLTIERLAHDGRGIAHEAGMTWFVSGGLPGEELEARVLGARSKVVDARSERLFSSSDLRRREPCTVAGRCGGCTLQHLEHGEQLALKQRTLQEQLQRFAGIEPEEWAAPLVGPEFGYRRRARIAVRWDARARRLDVGFRASASQEIVAFDECLVLVPPLQTIARALPALLQDFRKPESIGHVELFHGTASALLLRHTTALVDEDRQRLAAFCSAHQAQLWLQGAEQPLPVEPAAELGYSLGDWQLTLAYRPGDFVQVNAPVNESMIRQALDWLAPTADERVLDLFCGLGNFSLPLARRVARVVGVEGVAAMVERAGANALANGLGNAHFFQADLSKALAEAPWAEQGFTAVLLDPPRDGAFEAVREMSSLGARRVVYVSCNPATLARDAGEMARQGYRLKRAGILDMFPQTAHVEAMALFEAG</sequence>
<proteinExistence type="inferred from homology"/>
<feature type="chain" id="PRO_0000161907" description="23S rRNA (uracil(1939)-C(5))-methyltransferase RlmD">
    <location>
        <begin position="1"/>
        <end position="450"/>
    </location>
</feature>
<feature type="domain" description="TRAM" evidence="1">
    <location>
        <begin position="20"/>
        <end position="78"/>
    </location>
</feature>
<feature type="region of interest" description="Disordered" evidence="2">
    <location>
        <begin position="1"/>
        <end position="22"/>
    </location>
</feature>
<feature type="active site" description="Nucleophile" evidence="1">
    <location>
        <position position="407"/>
    </location>
</feature>
<feature type="binding site" evidence="1">
    <location>
        <position position="91"/>
    </location>
    <ligand>
        <name>[4Fe-4S] cluster</name>
        <dbReference type="ChEBI" id="CHEBI:49883"/>
    </ligand>
</feature>
<feature type="binding site" evidence="1">
    <location>
        <position position="97"/>
    </location>
    <ligand>
        <name>[4Fe-4S] cluster</name>
        <dbReference type="ChEBI" id="CHEBI:49883"/>
    </ligand>
</feature>
<feature type="binding site" evidence="1">
    <location>
        <position position="100"/>
    </location>
    <ligand>
        <name>[4Fe-4S] cluster</name>
        <dbReference type="ChEBI" id="CHEBI:49883"/>
    </ligand>
</feature>
<feature type="binding site" evidence="1">
    <location>
        <position position="179"/>
    </location>
    <ligand>
        <name>[4Fe-4S] cluster</name>
        <dbReference type="ChEBI" id="CHEBI:49883"/>
    </ligand>
</feature>
<feature type="binding site" evidence="1">
    <location>
        <position position="283"/>
    </location>
    <ligand>
        <name>S-adenosyl-L-methionine</name>
        <dbReference type="ChEBI" id="CHEBI:59789"/>
    </ligand>
</feature>
<feature type="binding site" evidence="1">
    <location>
        <position position="312"/>
    </location>
    <ligand>
        <name>S-adenosyl-L-methionine</name>
        <dbReference type="ChEBI" id="CHEBI:59789"/>
    </ligand>
</feature>
<feature type="binding site" evidence="1">
    <location>
        <position position="317"/>
    </location>
    <ligand>
        <name>S-adenosyl-L-methionine</name>
        <dbReference type="ChEBI" id="CHEBI:59789"/>
    </ligand>
</feature>
<feature type="binding site" evidence="1">
    <location>
        <position position="333"/>
    </location>
    <ligand>
        <name>S-adenosyl-L-methionine</name>
        <dbReference type="ChEBI" id="CHEBI:59789"/>
    </ligand>
</feature>
<feature type="binding site" evidence="1">
    <location>
        <position position="360"/>
    </location>
    <ligand>
        <name>S-adenosyl-L-methionine</name>
        <dbReference type="ChEBI" id="CHEBI:59789"/>
    </ligand>
</feature>
<feature type="binding site" evidence="1">
    <location>
        <position position="381"/>
    </location>
    <ligand>
        <name>S-adenosyl-L-methionine</name>
        <dbReference type="ChEBI" id="CHEBI:59789"/>
    </ligand>
</feature>